<evidence type="ECO:0000255" key="1">
    <source>
        <dbReference type="HAMAP-Rule" id="MF_01321"/>
    </source>
</evidence>
<evidence type="ECO:0000305" key="2"/>
<gene>
    <name evidence="1" type="primary">rpoB</name>
    <name type="ordered locus">VC0395_A2730</name>
    <name type="ordered locus">VC395_0371</name>
</gene>
<protein>
    <recommendedName>
        <fullName evidence="1">DNA-directed RNA polymerase subunit beta</fullName>
        <shortName evidence="1">RNAP subunit beta</shortName>
        <ecNumber evidence="1">2.7.7.6</ecNumber>
    </recommendedName>
    <alternativeName>
        <fullName evidence="1">RNA polymerase subunit beta</fullName>
    </alternativeName>
    <alternativeName>
        <fullName evidence="1">Transcriptase subunit beta</fullName>
    </alternativeName>
</protein>
<feature type="chain" id="PRO_0000329196" description="DNA-directed RNA polymerase subunit beta">
    <location>
        <begin position="1"/>
        <end position="1341"/>
    </location>
</feature>
<sequence>MVYSYTEKKRIRKDFGTRPQVLDIPYLLSIQLDSFEKFIEQDPEGQYGLEAAFRSVFPIQSYNGNSELQYVSYRLGEPVFDVKECQIRGVTYSKPLRVKLRLVIFDKDAPAGTVKDIKEQEVYMGEIPLMTENGTFVINGTERVIVSQLHRSPGVFFDSDKGKTHSSGKVLYNARIIPYRGSWLDFEFDPKDNLYVRIDRRRKLPASIILRVLGKTSAEILDIFFEKVNFEVKDQTLMMELVPERLRGETATFDIEADGKVYVEKGRRVTARHIRQLEKDGVNFIEVPVEYIVGKVSAKDYVNEATGELIITANQEISLEALANLSQAGYKKLEVLFTNDLDHGPFMSETLRVDSTTDRISALVEIYRMMRPGEPPTKEAAESLFESLFFSAERYDLSTVGRMKFNSSIGREDAEEQGTLDEVDIIEVMKKLISIRNGKGEVDDIDHLGNRRIRSVGEMAENQFRVGLVRVERAVKERLSLGDLDNVMPQDLINAKPISAAVKEFFGSSQLSQFMDQNNPLSEVTHKRRISALGPGGLTRERAGFEVRDVHVTHYGRLCPIETPEGPNIGLINSLSAFARCNEYGFLETPYRRVVNGVVTDEVDYLSAIEEGQFVIAQANAKLTEEGGFADELVTARQKGESGLHPREHVDYMDVATNQVVSIAASLIPFLEHDDANRALMGANMQRQAVPTLRSEKPLVGTGIERNVAVDSGVTAVAKRGGVIQSVDASRIVVKVNEEELIPGEAGIDIYNLTKYTRSNQNTCINQRPCVMPGEPVARGDVLADGPSTDLGELALGQNMRIAFMPWNGYNFEDSILVSERVVQDDRFTTIHIQELSCVARDTKLGAEEITADIPNVGEAALSKLDESGIVYIGAEVKGGDILVGKVTPKGETQLTPEEKLLRAIFGEKASDVKDTSLRVPNSVAGTVIDVQVFTRDGVEKDKRALEIEQMQLKEAKKDLTEEFQILEGGLLARVRSVLLAGGYTEAKLSSIERKKWLEQTLENEELQNQLEQLAEQYDELKADFDKKFEAKRRKITQGDDLAPGVLKIVKVYLAVKRRIQPGDKMAGRHGNKGVISKINPVEDMPYDENGQPVDIVLNPLGVPSRMNIGQILEVHLGLAAKGIGDKINQMIKEQQELAKLREFLQKVYDLGDTRQRVDISELSDEDVRTLAHNLRAGLPVATPVFDGAPESSIKAMLELADLPASGQLTLFDGRTGDAFERPVTVGYMYMLKLNHLVDDKMHARSTGSYSLVTQQPLGGKAQFGGQRFGEMEVWALEAYGAAYTLQEMLTVKSDDVNGRTKMYKNIVDGNHAMEPGMPESFNVLLKEIRSLGINIELEDE</sequence>
<dbReference type="EC" id="2.7.7.6" evidence="1"/>
<dbReference type="EMBL" id="CP000627">
    <property type="protein sequence ID" value="ABQ20577.1"/>
    <property type="status" value="ALT_INIT"/>
    <property type="molecule type" value="Genomic_DNA"/>
</dbReference>
<dbReference type="EMBL" id="CP001235">
    <property type="protein sequence ID" value="ACP08394.1"/>
    <property type="status" value="ALT_INIT"/>
    <property type="molecule type" value="Genomic_DNA"/>
</dbReference>
<dbReference type="RefSeq" id="WP_000263119.1">
    <property type="nucleotide sequence ID" value="NC_009457.1"/>
</dbReference>
<dbReference type="SMR" id="A5F3P5"/>
<dbReference type="KEGG" id="vco:VC0395_A2730"/>
<dbReference type="KEGG" id="vcr:VC395_0371"/>
<dbReference type="PATRIC" id="fig|345073.21.peg.359"/>
<dbReference type="eggNOG" id="COG0085">
    <property type="taxonomic scope" value="Bacteria"/>
</dbReference>
<dbReference type="HOGENOM" id="CLU_000524_4_3_6"/>
<dbReference type="OrthoDB" id="9803954at2"/>
<dbReference type="Proteomes" id="UP000000249">
    <property type="component" value="Chromosome 2"/>
</dbReference>
<dbReference type="GO" id="GO:0000428">
    <property type="term" value="C:DNA-directed RNA polymerase complex"/>
    <property type="evidence" value="ECO:0007669"/>
    <property type="project" value="UniProtKB-KW"/>
</dbReference>
<dbReference type="GO" id="GO:0003677">
    <property type="term" value="F:DNA binding"/>
    <property type="evidence" value="ECO:0007669"/>
    <property type="project" value="UniProtKB-UniRule"/>
</dbReference>
<dbReference type="GO" id="GO:0003899">
    <property type="term" value="F:DNA-directed RNA polymerase activity"/>
    <property type="evidence" value="ECO:0007669"/>
    <property type="project" value="UniProtKB-UniRule"/>
</dbReference>
<dbReference type="GO" id="GO:0032549">
    <property type="term" value="F:ribonucleoside binding"/>
    <property type="evidence" value="ECO:0007669"/>
    <property type="project" value="InterPro"/>
</dbReference>
<dbReference type="GO" id="GO:0006351">
    <property type="term" value="P:DNA-templated transcription"/>
    <property type="evidence" value="ECO:0007669"/>
    <property type="project" value="UniProtKB-UniRule"/>
</dbReference>
<dbReference type="CDD" id="cd00653">
    <property type="entry name" value="RNA_pol_B_RPB2"/>
    <property type="match status" value="1"/>
</dbReference>
<dbReference type="FunFam" id="2.30.150.10:FF:000001">
    <property type="entry name" value="DNA-directed RNA polymerase subunit beta"/>
    <property type="match status" value="1"/>
</dbReference>
<dbReference type="FunFam" id="2.40.270.10:FF:000003">
    <property type="entry name" value="DNA-directed RNA polymerase subunit beta"/>
    <property type="match status" value="1"/>
</dbReference>
<dbReference type="FunFam" id="2.40.270.10:FF:000004">
    <property type="entry name" value="DNA-directed RNA polymerase subunit beta"/>
    <property type="match status" value="1"/>
</dbReference>
<dbReference type="FunFam" id="2.40.50.100:FF:000006">
    <property type="entry name" value="DNA-directed RNA polymerase subunit beta"/>
    <property type="match status" value="1"/>
</dbReference>
<dbReference type="FunFam" id="2.40.50.150:FF:000001">
    <property type="entry name" value="DNA-directed RNA polymerase subunit beta"/>
    <property type="match status" value="1"/>
</dbReference>
<dbReference type="FunFam" id="3.90.1100.10:FF:000002">
    <property type="entry name" value="DNA-directed RNA polymerase subunit beta"/>
    <property type="match status" value="1"/>
</dbReference>
<dbReference type="FunFam" id="3.90.1110.10:FF:000001">
    <property type="entry name" value="DNA-directed RNA polymerase subunit beta"/>
    <property type="match status" value="1"/>
</dbReference>
<dbReference type="FunFam" id="3.90.1110.10:FF:000004">
    <property type="entry name" value="DNA-directed RNA polymerase subunit beta"/>
    <property type="match status" value="1"/>
</dbReference>
<dbReference type="FunFam" id="3.90.1800.10:FF:000001">
    <property type="entry name" value="DNA-directed RNA polymerase subunit beta"/>
    <property type="match status" value="1"/>
</dbReference>
<dbReference type="Gene3D" id="2.40.50.100">
    <property type="match status" value="1"/>
</dbReference>
<dbReference type="Gene3D" id="2.40.50.150">
    <property type="match status" value="1"/>
</dbReference>
<dbReference type="Gene3D" id="3.90.1100.10">
    <property type="match status" value="2"/>
</dbReference>
<dbReference type="Gene3D" id="2.30.150.10">
    <property type="entry name" value="DNA-directed RNA polymerase, beta subunit, external 1 domain"/>
    <property type="match status" value="1"/>
</dbReference>
<dbReference type="Gene3D" id="2.40.270.10">
    <property type="entry name" value="DNA-directed RNA polymerase, subunit 2, domain 6"/>
    <property type="match status" value="1"/>
</dbReference>
<dbReference type="Gene3D" id="3.90.1800.10">
    <property type="entry name" value="RNA polymerase alpha subunit dimerisation domain"/>
    <property type="match status" value="1"/>
</dbReference>
<dbReference type="HAMAP" id="MF_01321">
    <property type="entry name" value="RNApol_bact_RpoB"/>
    <property type="match status" value="1"/>
</dbReference>
<dbReference type="InterPro" id="IPR042107">
    <property type="entry name" value="DNA-dir_RNA_pol_bsu_ext_1_sf"/>
</dbReference>
<dbReference type="InterPro" id="IPR019462">
    <property type="entry name" value="DNA-dir_RNA_pol_bsu_external_1"/>
</dbReference>
<dbReference type="InterPro" id="IPR015712">
    <property type="entry name" value="DNA-dir_RNA_pol_su2"/>
</dbReference>
<dbReference type="InterPro" id="IPR007120">
    <property type="entry name" value="DNA-dir_RNAP_su2_dom"/>
</dbReference>
<dbReference type="InterPro" id="IPR037033">
    <property type="entry name" value="DNA-dir_RNAP_su2_hyb_sf"/>
</dbReference>
<dbReference type="InterPro" id="IPR010243">
    <property type="entry name" value="RNA_pol_bsu_bac"/>
</dbReference>
<dbReference type="InterPro" id="IPR007121">
    <property type="entry name" value="RNA_pol_bsu_CS"/>
</dbReference>
<dbReference type="InterPro" id="IPR007644">
    <property type="entry name" value="RNA_pol_bsu_protrusion"/>
</dbReference>
<dbReference type="InterPro" id="IPR007642">
    <property type="entry name" value="RNA_pol_Rpb2_2"/>
</dbReference>
<dbReference type="InterPro" id="IPR007645">
    <property type="entry name" value="RNA_pol_Rpb2_3"/>
</dbReference>
<dbReference type="InterPro" id="IPR007641">
    <property type="entry name" value="RNA_pol_Rpb2_7"/>
</dbReference>
<dbReference type="InterPro" id="IPR014724">
    <property type="entry name" value="RNA_pol_RPB2_OB-fold"/>
</dbReference>
<dbReference type="NCBIfam" id="NF001616">
    <property type="entry name" value="PRK00405.1"/>
    <property type="match status" value="1"/>
</dbReference>
<dbReference type="NCBIfam" id="TIGR02013">
    <property type="entry name" value="rpoB"/>
    <property type="match status" value="1"/>
</dbReference>
<dbReference type="PANTHER" id="PTHR20856">
    <property type="entry name" value="DNA-DIRECTED RNA POLYMERASE I SUBUNIT 2"/>
    <property type="match status" value="1"/>
</dbReference>
<dbReference type="Pfam" id="PF04563">
    <property type="entry name" value="RNA_pol_Rpb2_1"/>
    <property type="match status" value="1"/>
</dbReference>
<dbReference type="Pfam" id="PF04561">
    <property type="entry name" value="RNA_pol_Rpb2_2"/>
    <property type="match status" value="2"/>
</dbReference>
<dbReference type="Pfam" id="PF04565">
    <property type="entry name" value="RNA_pol_Rpb2_3"/>
    <property type="match status" value="1"/>
</dbReference>
<dbReference type="Pfam" id="PF10385">
    <property type="entry name" value="RNA_pol_Rpb2_45"/>
    <property type="match status" value="1"/>
</dbReference>
<dbReference type="Pfam" id="PF00562">
    <property type="entry name" value="RNA_pol_Rpb2_6"/>
    <property type="match status" value="1"/>
</dbReference>
<dbReference type="Pfam" id="PF04560">
    <property type="entry name" value="RNA_pol_Rpb2_7"/>
    <property type="match status" value="1"/>
</dbReference>
<dbReference type="SUPFAM" id="SSF64484">
    <property type="entry name" value="beta and beta-prime subunits of DNA dependent RNA-polymerase"/>
    <property type="match status" value="1"/>
</dbReference>
<dbReference type="PROSITE" id="PS01166">
    <property type="entry name" value="RNA_POL_BETA"/>
    <property type="match status" value="1"/>
</dbReference>
<keyword id="KW-0240">DNA-directed RNA polymerase</keyword>
<keyword id="KW-0548">Nucleotidyltransferase</keyword>
<keyword id="KW-0804">Transcription</keyword>
<keyword id="KW-0808">Transferase</keyword>
<name>RPOB_VIBC3</name>
<accession>A5F3P5</accession>
<accession>C3M3Y6</accession>
<proteinExistence type="inferred from homology"/>
<reference key="1">
    <citation type="submission" date="2007-03" db="EMBL/GenBank/DDBJ databases">
        <authorList>
            <person name="Heidelberg J."/>
        </authorList>
    </citation>
    <scope>NUCLEOTIDE SEQUENCE [LARGE SCALE GENOMIC DNA]</scope>
    <source>
        <strain>ATCC 39541 / Classical Ogawa 395 / O395</strain>
    </source>
</reference>
<reference key="2">
    <citation type="journal article" date="2008" name="PLoS ONE">
        <title>A recalibrated molecular clock and independent origins for the cholera pandemic clones.</title>
        <authorList>
            <person name="Feng L."/>
            <person name="Reeves P.R."/>
            <person name="Lan R."/>
            <person name="Ren Y."/>
            <person name="Gao C."/>
            <person name="Zhou Z."/>
            <person name="Ren Y."/>
            <person name="Cheng J."/>
            <person name="Wang W."/>
            <person name="Wang J."/>
            <person name="Qian W."/>
            <person name="Li D."/>
            <person name="Wang L."/>
        </authorList>
    </citation>
    <scope>NUCLEOTIDE SEQUENCE [LARGE SCALE GENOMIC DNA]</scope>
    <source>
        <strain>ATCC 39541 / Classical Ogawa 395 / O395</strain>
    </source>
</reference>
<organism>
    <name type="scientific">Vibrio cholerae serotype O1 (strain ATCC 39541 / Classical Ogawa 395 / O395)</name>
    <dbReference type="NCBI Taxonomy" id="345073"/>
    <lineage>
        <taxon>Bacteria</taxon>
        <taxon>Pseudomonadati</taxon>
        <taxon>Pseudomonadota</taxon>
        <taxon>Gammaproteobacteria</taxon>
        <taxon>Vibrionales</taxon>
        <taxon>Vibrionaceae</taxon>
        <taxon>Vibrio</taxon>
    </lineage>
</organism>
<comment type="function">
    <text evidence="1">DNA-dependent RNA polymerase catalyzes the transcription of DNA into RNA using the four ribonucleoside triphosphates as substrates.</text>
</comment>
<comment type="catalytic activity">
    <reaction evidence="1">
        <text>RNA(n) + a ribonucleoside 5'-triphosphate = RNA(n+1) + diphosphate</text>
        <dbReference type="Rhea" id="RHEA:21248"/>
        <dbReference type="Rhea" id="RHEA-COMP:14527"/>
        <dbReference type="Rhea" id="RHEA-COMP:17342"/>
        <dbReference type="ChEBI" id="CHEBI:33019"/>
        <dbReference type="ChEBI" id="CHEBI:61557"/>
        <dbReference type="ChEBI" id="CHEBI:140395"/>
        <dbReference type="EC" id="2.7.7.6"/>
    </reaction>
</comment>
<comment type="subunit">
    <text evidence="1">The RNAP catalytic core consists of 2 alpha, 1 beta, 1 beta' and 1 omega subunit. When a sigma factor is associated with the core the holoenzyme is formed, which can initiate transcription.</text>
</comment>
<comment type="similarity">
    <text evidence="1">Belongs to the RNA polymerase beta chain family.</text>
</comment>
<comment type="sequence caution" evidence="2">
    <conflict type="erroneous initiation">
        <sequence resource="EMBL-CDS" id="ABQ20577"/>
    </conflict>
</comment>
<comment type="sequence caution" evidence="2">
    <conflict type="erroneous initiation">
        <sequence resource="EMBL-CDS" id="ACP08394"/>
    </conflict>
</comment>